<accession>Q8K9Y8</accession>
<proteinExistence type="inferred from homology"/>
<evidence type="ECO:0000255" key="1">
    <source>
        <dbReference type="HAMAP-Rule" id="MF_00332"/>
    </source>
</evidence>
<evidence type="ECO:0000256" key="2">
    <source>
        <dbReference type="SAM" id="MobiDB-lite"/>
    </source>
</evidence>
<comment type="function">
    <text evidence="1">Acts as a chaperone.</text>
</comment>
<comment type="induction">
    <text evidence="1">By stress conditions e.g. heat shock.</text>
</comment>
<comment type="similarity">
    <text evidence="1">Belongs to the heat shock protein 70 family.</text>
</comment>
<keyword id="KW-0067">ATP-binding</keyword>
<keyword id="KW-0143">Chaperone</keyword>
<keyword id="KW-0547">Nucleotide-binding</keyword>
<keyword id="KW-0597">Phosphoprotein</keyword>
<keyword id="KW-0346">Stress response</keyword>
<reference key="1">
    <citation type="journal article" date="2002" name="Science">
        <title>50 million years of genomic stasis in endosymbiotic bacteria.</title>
        <authorList>
            <person name="Tamas I."/>
            <person name="Klasson L."/>
            <person name="Canbaeck B."/>
            <person name="Naeslund A.K."/>
            <person name="Eriksson A.-S."/>
            <person name="Wernegreen J.J."/>
            <person name="Sandstroem J.P."/>
            <person name="Moran N.A."/>
            <person name="Andersson S.G.E."/>
        </authorList>
    </citation>
    <scope>NUCLEOTIDE SEQUENCE [LARGE SCALE GENOMIC DNA]</scope>
    <source>
        <strain>Sg</strain>
    </source>
</reference>
<feature type="chain" id="PRO_0000078434" description="Chaperone protein DnaK">
    <location>
        <begin position="1"/>
        <end position="638"/>
    </location>
</feature>
<feature type="region of interest" description="Disordered" evidence="2">
    <location>
        <begin position="600"/>
        <end position="638"/>
    </location>
</feature>
<feature type="compositionally biased region" description="Basic and acidic residues" evidence="2">
    <location>
        <begin position="602"/>
        <end position="624"/>
    </location>
</feature>
<feature type="modified residue" description="Phosphothreonine; by autocatalysis" evidence="1">
    <location>
        <position position="199"/>
    </location>
</feature>
<sequence>MGKIIGIDLGTTNSCVAIMDGNKPRVLENSEGDRTTPSIIAYTEKGEVLVGQPAKRQAITNPKNTLFAIKRLIGRKFRDDEVQRDIKIMPYSIINSENGDAWIDVKKQKMAPPQISAEVLKKMKKTAEDYLGESIKEAVITVPAYFNDAQRQATKDAGRIAGLEVKRIINEPTAAALAYGLDKGEGNRTIAVYDLGGGTFDISIIEIDDVDKEKTFEVLATNGDTHLGGEDFDSRLINYLVQEFKKEQGIDLRNDSLAMQRLKEAAEKAKIELSSAQQTDVNLPYITADSNGPKHLNIKVTRSKLESLVEDLVMRSIEPLKVALKDAGLSVGDINDVILVGGQTRMPMVQSKVADFFGKEPRKDVNPDEAVAVGAAVQGGVLSGDVKDVLLLDVTPLSLGIETMGGIMTSLINKNTTIPTKHSQVFSTAEDNQSAVTIHILQGERKRALDNKSLGQFNLDGIEPAPRGTAQIEVTFDIDSDGILHVSAKDKKTGKEQKITIKASSGLNEEEIKKMINDAEANSEADRKFEELIQVRNQGDQLIHSIRKQLDENKNQIEKKELEKIKSALDELERSLKGENKSEIEKNIQNLLNISSKLTEINQKKSEENLKKEDTSSESKKDENVVDAEFEEIKDPKK</sequence>
<organism>
    <name type="scientific">Buchnera aphidicola subsp. Schizaphis graminum (strain Sg)</name>
    <dbReference type="NCBI Taxonomy" id="198804"/>
    <lineage>
        <taxon>Bacteria</taxon>
        <taxon>Pseudomonadati</taxon>
        <taxon>Pseudomonadota</taxon>
        <taxon>Gammaproteobacteria</taxon>
        <taxon>Enterobacterales</taxon>
        <taxon>Erwiniaceae</taxon>
        <taxon>Buchnera</taxon>
    </lineage>
</organism>
<protein>
    <recommendedName>
        <fullName evidence="1">Chaperone protein DnaK</fullName>
    </recommendedName>
    <alternativeName>
        <fullName evidence="1">HSP70</fullName>
    </alternativeName>
    <alternativeName>
        <fullName evidence="1">Heat shock 70 kDa protein</fullName>
    </alternativeName>
    <alternativeName>
        <fullName evidence="1">Heat shock protein 70</fullName>
    </alternativeName>
</protein>
<gene>
    <name evidence="1" type="primary">dnaK</name>
    <name type="ordered locus">BUsg_146</name>
</gene>
<name>DNAK_BUCAP</name>
<dbReference type="EMBL" id="AE013218">
    <property type="protein sequence ID" value="AAM67714.1"/>
    <property type="molecule type" value="Genomic_DNA"/>
</dbReference>
<dbReference type="RefSeq" id="WP_011053681.1">
    <property type="nucleotide sequence ID" value="NC_004061.1"/>
</dbReference>
<dbReference type="SMR" id="Q8K9Y8"/>
<dbReference type="STRING" id="198804.BUsg_146"/>
<dbReference type="GeneID" id="93003616"/>
<dbReference type="KEGG" id="bas:BUsg_146"/>
<dbReference type="eggNOG" id="COG0443">
    <property type="taxonomic scope" value="Bacteria"/>
</dbReference>
<dbReference type="HOGENOM" id="CLU_005965_2_4_6"/>
<dbReference type="Proteomes" id="UP000000416">
    <property type="component" value="Chromosome"/>
</dbReference>
<dbReference type="GO" id="GO:0005524">
    <property type="term" value="F:ATP binding"/>
    <property type="evidence" value="ECO:0007669"/>
    <property type="project" value="UniProtKB-UniRule"/>
</dbReference>
<dbReference type="GO" id="GO:0140662">
    <property type="term" value="F:ATP-dependent protein folding chaperone"/>
    <property type="evidence" value="ECO:0007669"/>
    <property type="project" value="InterPro"/>
</dbReference>
<dbReference type="GO" id="GO:0051082">
    <property type="term" value="F:unfolded protein binding"/>
    <property type="evidence" value="ECO:0007669"/>
    <property type="project" value="InterPro"/>
</dbReference>
<dbReference type="CDD" id="cd10234">
    <property type="entry name" value="ASKHA_NBD_HSP70_DnaK-like"/>
    <property type="match status" value="1"/>
</dbReference>
<dbReference type="FunFam" id="2.60.34.10:FF:000014">
    <property type="entry name" value="Chaperone protein DnaK HSP70"/>
    <property type="match status" value="1"/>
</dbReference>
<dbReference type="FunFam" id="3.30.30.30:FF:000003">
    <property type="entry name" value="Heat shock protein 9"/>
    <property type="match status" value="1"/>
</dbReference>
<dbReference type="FunFam" id="1.20.1270.10:FF:000001">
    <property type="entry name" value="Molecular chaperone DnaK"/>
    <property type="match status" value="1"/>
</dbReference>
<dbReference type="FunFam" id="3.30.420.40:FF:000004">
    <property type="entry name" value="Molecular chaperone DnaK"/>
    <property type="match status" value="1"/>
</dbReference>
<dbReference type="FunFam" id="3.90.640.10:FF:000003">
    <property type="entry name" value="Molecular chaperone DnaK"/>
    <property type="match status" value="1"/>
</dbReference>
<dbReference type="Gene3D" id="1.20.1270.10">
    <property type="match status" value="1"/>
</dbReference>
<dbReference type="Gene3D" id="3.30.420.40">
    <property type="match status" value="2"/>
</dbReference>
<dbReference type="Gene3D" id="3.90.640.10">
    <property type="entry name" value="Actin, Chain A, domain 4"/>
    <property type="match status" value="1"/>
</dbReference>
<dbReference type="Gene3D" id="2.60.34.10">
    <property type="entry name" value="Substrate Binding Domain Of DNAk, Chain A, domain 1"/>
    <property type="match status" value="1"/>
</dbReference>
<dbReference type="HAMAP" id="MF_00332">
    <property type="entry name" value="DnaK"/>
    <property type="match status" value="1"/>
</dbReference>
<dbReference type="InterPro" id="IPR043129">
    <property type="entry name" value="ATPase_NBD"/>
</dbReference>
<dbReference type="InterPro" id="IPR012725">
    <property type="entry name" value="Chaperone_DnaK"/>
</dbReference>
<dbReference type="InterPro" id="IPR018181">
    <property type="entry name" value="Heat_shock_70_CS"/>
</dbReference>
<dbReference type="InterPro" id="IPR029048">
    <property type="entry name" value="HSP70_C_sf"/>
</dbReference>
<dbReference type="InterPro" id="IPR029047">
    <property type="entry name" value="HSP70_peptide-bd_sf"/>
</dbReference>
<dbReference type="InterPro" id="IPR013126">
    <property type="entry name" value="Hsp_70_fam"/>
</dbReference>
<dbReference type="NCBIfam" id="NF001413">
    <property type="entry name" value="PRK00290.1"/>
    <property type="match status" value="1"/>
</dbReference>
<dbReference type="NCBIfam" id="NF003520">
    <property type="entry name" value="PRK05183.1"/>
    <property type="match status" value="1"/>
</dbReference>
<dbReference type="NCBIfam" id="TIGR02350">
    <property type="entry name" value="prok_dnaK"/>
    <property type="match status" value="1"/>
</dbReference>
<dbReference type="PANTHER" id="PTHR19375">
    <property type="entry name" value="HEAT SHOCK PROTEIN 70KDA"/>
    <property type="match status" value="1"/>
</dbReference>
<dbReference type="Pfam" id="PF00012">
    <property type="entry name" value="HSP70"/>
    <property type="match status" value="1"/>
</dbReference>
<dbReference type="PRINTS" id="PR00301">
    <property type="entry name" value="HEATSHOCK70"/>
</dbReference>
<dbReference type="SUPFAM" id="SSF53067">
    <property type="entry name" value="Actin-like ATPase domain"/>
    <property type="match status" value="2"/>
</dbReference>
<dbReference type="SUPFAM" id="SSF100934">
    <property type="entry name" value="Heat shock protein 70kD (HSP70), C-terminal subdomain"/>
    <property type="match status" value="1"/>
</dbReference>
<dbReference type="SUPFAM" id="SSF100920">
    <property type="entry name" value="Heat shock protein 70kD (HSP70), peptide-binding domain"/>
    <property type="match status" value="1"/>
</dbReference>
<dbReference type="PROSITE" id="PS00297">
    <property type="entry name" value="HSP70_1"/>
    <property type="match status" value="1"/>
</dbReference>
<dbReference type="PROSITE" id="PS00329">
    <property type="entry name" value="HSP70_2"/>
    <property type="match status" value="1"/>
</dbReference>
<dbReference type="PROSITE" id="PS01036">
    <property type="entry name" value="HSP70_3"/>
    <property type="match status" value="1"/>
</dbReference>